<sequence length="218" mass="23553">MNQSSLLAEFGEPITRVENALQALREGRGVLLLDDEDRENEGDIIYSVEHLTNAQMALMIRECSGIVCLCLTDEQANQLELPPMVVDNNSANQTAFTVTIEAKVGVTTGVSAADRVTTIKTAANPTAKPTDLARPGHVFPLRARKGGVLARRGHTEGTVDLMQMAGLQSAGVLCEVTNPDGTMAKAPEIVAFGKMHNMPVLTIEDMVMYRTEFDLKLA</sequence>
<dbReference type="EC" id="4.1.99.12" evidence="1"/>
<dbReference type="EMBL" id="FM954973">
    <property type="protein sequence ID" value="CAV27265.1"/>
    <property type="molecule type" value="Genomic_DNA"/>
</dbReference>
<dbReference type="SMR" id="B7VT10"/>
<dbReference type="STRING" id="575788.VS_II1263"/>
<dbReference type="KEGG" id="vsp:VS_II1263"/>
<dbReference type="eggNOG" id="COG0108">
    <property type="taxonomic scope" value="Bacteria"/>
</dbReference>
<dbReference type="HOGENOM" id="CLU_020273_3_0_6"/>
<dbReference type="UniPathway" id="UPA00275">
    <property type="reaction ID" value="UER00399"/>
</dbReference>
<dbReference type="Proteomes" id="UP000009100">
    <property type="component" value="Chromosome 2"/>
</dbReference>
<dbReference type="GO" id="GO:0005829">
    <property type="term" value="C:cytosol"/>
    <property type="evidence" value="ECO:0007669"/>
    <property type="project" value="TreeGrafter"/>
</dbReference>
<dbReference type="GO" id="GO:0008686">
    <property type="term" value="F:3,4-dihydroxy-2-butanone-4-phosphate synthase activity"/>
    <property type="evidence" value="ECO:0007669"/>
    <property type="project" value="UniProtKB-UniRule"/>
</dbReference>
<dbReference type="GO" id="GO:0000287">
    <property type="term" value="F:magnesium ion binding"/>
    <property type="evidence" value="ECO:0007669"/>
    <property type="project" value="UniProtKB-UniRule"/>
</dbReference>
<dbReference type="GO" id="GO:0030145">
    <property type="term" value="F:manganese ion binding"/>
    <property type="evidence" value="ECO:0007669"/>
    <property type="project" value="UniProtKB-UniRule"/>
</dbReference>
<dbReference type="GO" id="GO:0009231">
    <property type="term" value="P:riboflavin biosynthetic process"/>
    <property type="evidence" value="ECO:0007669"/>
    <property type="project" value="UniProtKB-UniRule"/>
</dbReference>
<dbReference type="FunFam" id="3.90.870.10:FF:000002">
    <property type="entry name" value="3,4-dihydroxy-2-butanone 4-phosphate synthase"/>
    <property type="match status" value="1"/>
</dbReference>
<dbReference type="Gene3D" id="3.90.870.10">
    <property type="entry name" value="DHBP synthase"/>
    <property type="match status" value="1"/>
</dbReference>
<dbReference type="HAMAP" id="MF_00180">
    <property type="entry name" value="RibB"/>
    <property type="match status" value="1"/>
</dbReference>
<dbReference type="InterPro" id="IPR017945">
    <property type="entry name" value="DHBP_synth_RibB-like_a/b_dom"/>
</dbReference>
<dbReference type="InterPro" id="IPR000422">
    <property type="entry name" value="DHBP_synthase_RibB"/>
</dbReference>
<dbReference type="NCBIfam" id="TIGR00506">
    <property type="entry name" value="ribB"/>
    <property type="match status" value="1"/>
</dbReference>
<dbReference type="PANTHER" id="PTHR21327:SF38">
    <property type="entry name" value="3,4-DIHYDROXY-2-BUTANONE 4-PHOSPHATE SYNTHASE"/>
    <property type="match status" value="1"/>
</dbReference>
<dbReference type="PANTHER" id="PTHR21327">
    <property type="entry name" value="GTP CYCLOHYDROLASE II-RELATED"/>
    <property type="match status" value="1"/>
</dbReference>
<dbReference type="Pfam" id="PF00926">
    <property type="entry name" value="DHBP_synthase"/>
    <property type="match status" value="1"/>
</dbReference>
<dbReference type="SUPFAM" id="SSF55821">
    <property type="entry name" value="YrdC/RibB"/>
    <property type="match status" value="1"/>
</dbReference>
<evidence type="ECO:0000255" key="1">
    <source>
        <dbReference type="HAMAP-Rule" id="MF_00180"/>
    </source>
</evidence>
<protein>
    <recommendedName>
        <fullName evidence="1">3,4-dihydroxy-2-butanone 4-phosphate synthase</fullName>
        <shortName evidence="1">DHBP synthase</shortName>
        <ecNumber evidence="1">4.1.99.12</ecNumber>
    </recommendedName>
</protein>
<comment type="function">
    <text evidence="1">Catalyzes the conversion of D-ribulose 5-phosphate to formate and 3,4-dihydroxy-2-butanone 4-phosphate.</text>
</comment>
<comment type="catalytic activity">
    <reaction evidence="1">
        <text>D-ribulose 5-phosphate = (2S)-2-hydroxy-3-oxobutyl phosphate + formate + H(+)</text>
        <dbReference type="Rhea" id="RHEA:18457"/>
        <dbReference type="ChEBI" id="CHEBI:15378"/>
        <dbReference type="ChEBI" id="CHEBI:15740"/>
        <dbReference type="ChEBI" id="CHEBI:58121"/>
        <dbReference type="ChEBI" id="CHEBI:58830"/>
        <dbReference type="EC" id="4.1.99.12"/>
    </reaction>
</comment>
<comment type="cofactor">
    <cofactor evidence="1">
        <name>Mg(2+)</name>
        <dbReference type="ChEBI" id="CHEBI:18420"/>
    </cofactor>
    <cofactor evidence="1">
        <name>Mn(2+)</name>
        <dbReference type="ChEBI" id="CHEBI:29035"/>
    </cofactor>
    <text evidence="1">Binds 2 divalent metal cations per subunit. Magnesium or manganese.</text>
</comment>
<comment type="pathway">
    <text evidence="1">Cofactor biosynthesis; riboflavin biosynthesis; 2-hydroxy-3-oxobutyl phosphate from D-ribulose 5-phosphate: step 1/1.</text>
</comment>
<comment type="subunit">
    <text evidence="1">Homodimer.</text>
</comment>
<comment type="similarity">
    <text evidence="1">Belongs to the DHBP synthase family.</text>
</comment>
<gene>
    <name evidence="1" type="primary">ribB</name>
    <name type="ordered locus">VS_II1263</name>
</gene>
<feature type="chain" id="PRO_1000193761" description="3,4-dihydroxy-2-butanone 4-phosphate synthase">
    <location>
        <begin position="1"/>
        <end position="218"/>
    </location>
</feature>
<feature type="binding site" evidence="1">
    <location>
        <begin position="38"/>
        <end position="39"/>
    </location>
    <ligand>
        <name>D-ribulose 5-phosphate</name>
        <dbReference type="ChEBI" id="CHEBI:58121"/>
    </ligand>
</feature>
<feature type="binding site" evidence="1">
    <location>
        <position position="39"/>
    </location>
    <ligand>
        <name>Mg(2+)</name>
        <dbReference type="ChEBI" id="CHEBI:18420"/>
        <label>1</label>
    </ligand>
</feature>
<feature type="binding site" evidence="1">
    <location>
        <position position="39"/>
    </location>
    <ligand>
        <name>Mg(2+)</name>
        <dbReference type="ChEBI" id="CHEBI:18420"/>
        <label>2</label>
    </ligand>
</feature>
<feature type="binding site" evidence="1">
    <location>
        <position position="43"/>
    </location>
    <ligand>
        <name>D-ribulose 5-phosphate</name>
        <dbReference type="ChEBI" id="CHEBI:58121"/>
    </ligand>
</feature>
<feature type="binding site" evidence="1">
    <location>
        <begin position="151"/>
        <end position="155"/>
    </location>
    <ligand>
        <name>D-ribulose 5-phosphate</name>
        <dbReference type="ChEBI" id="CHEBI:58121"/>
    </ligand>
</feature>
<feature type="binding site" evidence="1">
    <location>
        <position position="154"/>
    </location>
    <ligand>
        <name>Mg(2+)</name>
        <dbReference type="ChEBI" id="CHEBI:18420"/>
        <label>2</label>
    </ligand>
</feature>
<feature type="binding site" evidence="1">
    <location>
        <position position="175"/>
    </location>
    <ligand>
        <name>D-ribulose 5-phosphate</name>
        <dbReference type="ChEBI" id="CHEBI:58121"/>
    </ligand>
</feature>
<feature type="site" description="Essential for catalytic activity" evidence="1">
    <location>
        <position position="137"/>
    </location>
</feature>
<feature type="site" description="Essential for catalytic activity" evidence="1">
    <location>
        <position position="175"/>
    </location>
</feature>
<accession>B7VT10</accession>
<keyword id="KW-0456">Lyase</keyword>
<keyword id="KW-0460">Magnesium</keyword>
<keyword id="KW-0464">Manganese</keyword>
<keyword id="KW-0479">Metal-binding</keyword>
<keyword id="KW-0686">Riboflavin biosynthesis</keyword>
<name>RIBB_VIBA3</name>
<organism>
    <name type="scientific">Vibrio atlanticus (strain LGP32)</name>
    <name type="common">Vibrio splendidus (strain Mel32)</name>
    <dbReference type="NCBI Taxonomy" id="575788"/>
    <lineage>
        <taxon>Bacteria</taxon>
        <taxon>Pseudomonadati</taxon>
        <taxon>Pseudomonadota</taxon>
        <taxon>Gammaproteobacteria</taxon>
        <taxon>Vibrionales</taxon>
        <taxon>Vibrionaceae</taxon>
        <taxon>Vibrio</taxon>
    </lineage>
</organism>
<proteinExistence type="inferred from homology"/>
<reference key="1">
    <citation type="submission" date="2009-02" db="EMBL/GenBank/DDBJ databases">
        <title>Vibrio splendidus str. LGP32 complete genome.</title>
        <authorList>
            <person name="Mazel D."/>
            <person name="Le Roux F."/>
        </authorList>
    </citation>
    <scope>NUCLEOTIDE SEQUENCE [LARGE SCALE GENOMIC DNA]</scope>
    <source>
        <strain>LGP32</strain>
    </source>
</reference>